<sequence length="177" mass="19350">MSDTEDNKNKQTTRRDFIVLTASSVAAVGAACAFWPIIDSFNPSADVLALSSIEVDLSNIAIGQTVTVKWQGKPIFITNRTHDEIAAARAVKMSELIDPERDEVRVKAGHDNWLVTIGICTHLGCVPLSHKGEYNGWFCPCHGSQYDSSGRVRKGPAPLNLAVPPYIFISDKKIRIG</sequence>
<proteinExistence type="inferred from homology"/>
<accession>Q9ZDQ5</accession>
<name>UCRI_RICPR</name>
<dbReference type="EC" id="7.1.1.8"/>
<dbReference type="EMBL" id="AJ235271">
    <property type="protein sequence ID" value="CAA14732.1"/>
    <property type="molecule type" value="Genomic_DNA"/>
</dbReference>
<dbReference type="PIR" id="B71682">
    <property type="entry name" value="B71682"/>
</dbReference>
<dbReference type="RefSeq" id="NP_220655.1">
    <property type="nucleotide sequence ID" value="NC_000963.1"/>
</dbReference>
<dbReference type="RefSeq" id="WP_004597339.1">
    <property type="nucleotide sequence ID" value="NC_000963.1"/>
</dbReference>
<dbReference type="SMR" id="Q9ZDQ5"/>
<dbReference type="STRING" id="272947.gene:17555351"/>
<dbReference type="EnsemblBacteria" id="CAA14732">
    <property type="protein sequence ID" value="CAA14732"/>
    <property type="gene ID" value="CAA14732"/>
</dbReference>
<dbReference type="GeneID" id="57569398"/>
<dbReference type="KEGG" id="rpr:RP270"/>
<dbReference type="PATRIC" id="fig|272947.5.peg.277"/>
<dbReference type="eggNOG" id="COG0723">
    <property type="taxonomic scope" value="Bacteria"/>
</dbReference>
<dbReference type="HOGENOM" id="CLU_055690_0_2_5"/>
<dbReference type="OrthoDB" id="9767869at2"/>
<dbReference type="Proteomes" id="UP000002480">
    <property type="component" value="Chromosome"/>
</dbReference>
<dbReference type="GO" id="GO:0005886">
    <property type="term" value="C:plasma membrane"/>
    <property type="evidence" value="ECO:0007669"/>
    <property type="project" value="UniProtKB-SubCell"/>
</dbReference>
<dbReference type="GO" id="GO:0051537">
    <property type="term" value="F:2 iron, 2 sulfur cluster binding"/>
    <property type="evidence" value="ECO:0007669"/>
    <property type="project" value="UniProtKB-KW"/>
</dbReference>
<dbReference type="GO" id="GO:0046872">
    <property type="term" value="F:metal ion binding"/>
    <property type="evidence" value="ECO:0007669"/>
    <property type="project" value="UniProtKB-KW"/>
</dbReference>
<dbReference type="GO" id="GO:0008121">
    <property type="term" value="F:ubiquinol-cytochrome-c reductase activity"/>
    <property type="evidence" value="ECO:0007669"/>
    <property type="project" value="UniProtKB-EC"/>
</dbReference>
<dbReference type="CDD" id="cd03470">
    <property type="entry name" value="Rieske_cytochrome_bc1"/>
    <property type="match status" value="1"/>
</dbReference>
<dbReference type="FunFam" id="2.102.10.10:FF:000001">
    <property type="entry name" value="Cytochrome b-c1 complex subunit Rieske, mitochondrial"/>
    <property type="match status" value="1"/>
</dbReference>
<dbReference type="Gene3D" id="2.102.10.10">
    <property type="entry name" value="Rieske [2Fe-2S] iron-sulphur domain"/>
    <property type="match status" value="1"/>
</dbReference>
<dbReference type="Gene3D" id="1.20.5.510">
    <property type="entry name" value="Single helix bin"/>
    <property type="match status" value="1"/>
</dbReference>
<dbReference type="InterPro" id="IPR017941">
    <property type="entry name" value="Rieske_2Fe-2S"/>
</dbReference>
<dbReference type="InterPro" id="IPR036922">
    <property type="entry name" value="Rieske_2Fe-2S_sf"/>
</dbReference>
<dbReference type="InterPro" id="IPR014349">
    <property type="entry name" value="Rieske_Fe-S_prot"/>
</dbReference>
<dbReference type="InterPro" id="IPR005805">
    <property type="entry name" value="Rieske_Fe-S_prot_C"/>
</dbReference>
<dbReference type="InterPro" id="IPR006311">
    <property type="entry name" value="TAT_signal"/>
</dbReference>
<dbReference type="InterPro" id="IPR019546">
    <property type="entry name" value="TAT_signal_bac_arc"/>
</dbReference>
<dbReference type="InterPro" id="IPR019470">
    <property type="entry name" value="Ubiq_cytC_Rdtase_Fe-S_su_TAT"/>
</dbReference>
<dbReference type="InterPro" id="IPR006317">
    <property type="entry name" value="Ubiquinol_cyt_c_Rdtase_Fe-S-su"/>
</dbReference>
<dbReference type="NCBIfam" id="TIGR01416">
    <property type="entry name" value="Rieske_proteo"/>
    <property type="match status" value="1"/>
</dbReference>
<dbReference type="NCBIfam" id="TIGR01409">
    <property type="entry name" value="TAT_signal_seq"/>
    <property type="match status" value="1"/>
</dbReference>
<dbReference type="PANTHER" id="PTHR10134">
    <property type="entry name" value="CYTOCHROME B-C1 COMPLEX SUBUNIT RIESKE, MITOCHONDRIAL"/>
    <property type="match status" value="1"/>
</dbReference>
<dbReference type="Pfam" id="PF00355">
    <property type="entry name" value="Rieske"/>
    <property type="match status" value="1"/>
</dbReference>
<dbReference type="Pfam" id="PF10399">
    <property type="entry name" value="UCR_Fe-S_N"/>
    <property type="match status" value="1"/>
</dbReference>
<dbReference type="PRINTS" id="PR00162">
    <property type="entry name" value="RIESKE"/>
</dbReference>
<dbReference type="SUPFAM" id="SSF50022">
    <property type="entry name" value="ISP domain"/>
    <property type="match status" value="1"/>
</dbReference>
<dbReference type="PROSITE" id="PS51296">
    <property type="entry name" value="RIESKE"/>
    <property type="match status" value="1"/>
</dbReference>
<dbReference type="PROSITE" id="PS51318">
    <property type="entry name" value="TAT"/>
    <property type="match status" value="1"/>
</dbReference>
<reference key="1">
    <citation type="journal article" date="1998" name="Nature">
        <title>The genome sequence of Rickettsia prowazekii and the origin of mitochondria.</title>
        <authorList>
            <person name="Andersson S.G.E."/>
            <person name="Zomorodipour A."/>
            <person name="Andersson J.O."/>
            <person name="Sicheritz-Ponten T."/>
            <person name="Alsmark U.C.M."/>
            <person name="Podowski R.M."/>
            <person name="Naeslund A.K."/>
            <person name="Eriksson A.-S."/>
            <person name="Winkler H.H."/>
            <person name="Kurland C.G."/>
        </authorList>
    </citation>
    <scope>NUCLEOTIDE SEQUENCE [LARGE SCALE GENOMIC DNA]</scope>
    <source>
        <strain>Madrid E</strain>
    </source>
</reference>
<protein>
    <recommendedName>
        <fullName>Ubiquinol-cytochrome c reductase iron-sulfur subunit</fullName>
        <ecNumber>7.1.1.8</ecNumber>
    </recommendedName>
    <alternativeName>
        <fullName>Rieske iron-sulfur protein</fullName>
        <shortName>RISP</shortName>
    </alternativeName>
</protein>
<gene>
    <name type="primary">petA</name>
    <name type="ordered locus">RP270</name>
</gene>
<feature type="chain" id="PRO_0000127766" description="Ubiquinol-cytochrome c reductase iron-sulfur subunit">
    <location>
        <begin position="1"/>
        <end position="177"/>
    </location>
</feature>
<feature type="transmembrane region" description="Helical" evidence="1">
    <location>
        <begin position="18"/>
        <end position="38"/>
    </location>
</feature>
<feature type="domain" description="Rieske" evidence="2">
    <location>
        <begin position="88"/>
        <end position="175"/>
    </location>
</feature>
<feature type="binding site" evidence="2">
    <location>
        <position position="120"/>
    </location>
    <ligand>
        <name>[2Fe-2S] cluster</name>
        <dbReference type="ChEBI" id="CHEBI:190135"/>
    </ligand>
</feature>
<feature type="binding site" evidence="2">
    <location>
        <position position="122"/>
    </location>
    <ligand>
        <name>[2Fe-2S] cluster</name>
        <dbReference type="ChEBI" id="CHEBI:190135"/>
    </ligand>
</feature>
<feature type="binding site" evidence="2">
    <location>
        <position position="139"/>
    </location>
    <ligand>
        <name>[2Fe-2S] cluster</name>
        <dbReference type="ChEBI" id="CHEBI:190135"/>
    </ligand>
</feature>
<feature type="binding site" evidence="2">
    <location>
        <position position="142"/>
    </location>
    <ligand>
        <name>[2Fe-2S] cluster</name>
        <dbReference type="ChEBI" id="CHEBI:190135"/>
    </ligand>
</feature>
<feature type="disulfide bond" evidence="2">
    <location>
        <begin position="125"/>
        <end position="141"/>
    </location>
</feature>
<evidence type="ECO:0000255" key="1"/>
<evidence type="ECO:0000255" key="2">
    <source>
        <dbReference type="PROSITE-ProRule" id="PRU00628"/>
    </source>
</evidence>
<evidence type="ECO:0000305" key="3"/>
<keyword id="KW-0001">2Fe-2S</keyword>
<keyword id="KW-1003">Cell membrane</keyword>
<keyword id="KW-1015">Disulfide bond</keyword>
<keyword id="KW-0249">Electron transport</keyword>
<keyword id="KW-0408">Iron</keyword>
<keyword id="KW-0411">Iron-sulfur</keyword>
<keyword id="KW-0472">Membrane</keyword>
<keyword id="KW-0479">Metal-binding</keyword>
<keyword id="KW-1185">Reference proteome</keyword>
<keyword id="KW-1278">Translocase</keyword>
<keyword id="KW-0812">Transmembrane</keyword>
<keyword id="KW-1133">Transmembrane helix</keyword>
<keyword id="KW-0813">Transport</keyword>
<organism>
    <name type="scientific">Rickettsia prowazekii (strain Madrid E)</name>
    <dbReference type="NCBI Taxonomy" id="272947"/>
    <lineage>
        <taxon>Bacteria</taxon>
        <taxon>Pseudomonadati</taxon>
        <taxon>Pseudomonadota</taxon>
        <taxon>Alphaproteobacteria</taxon>
        <taxon>Rickettsiales</taxon>
        <taxon>Rickettsiaceae</taxon>
        <taxon>Rickettsieae</taxon>
        <taxon>Rickettsia</taxon>
        <taxon>typhus group</taxon>
    </lineage>
</organism>
<comment type="function">
    <text>Component of the ubiquinol-cytochrome c reductase complex (complex III or cytochrome b-c1 complex), which is a respiratory chain that generates an electrochemical potential coupled to ATP synthesis.</text>
</comment>
<comment type="catalytic activity">
    <reaction>
        <text>a quinol + 2 Fe(III)-[cytochrome c](out) = a quinone + 2 Fe(II)-[cytochrome c](out) + 2 H(+)(out)</text>
        <dbReference type="Rhea" id="RHEA:11484"/>
        <dbReference type="Rhea" id="RHEA-COMP:10350"/>
        <dbReference type="Rhea" id="RHEA-COMP:14399"/>
        <dbReference type="ChEBI" id="CHEBI:15378"/>
        <dbReference type="ChEBI" id="CHEBI:24646"/>
        <dbReference type="ChEBI" id="CHEBI:29033"/>
        <dbReference type="ChEBI" id="CHEBI:29034"/>
        <dbReference type="ChEBI" id="CHEBI:132124"/>
        <dbReference type="EC" id="7.1.1.8"/>
    </reaction>
</comment>
<comment type="cofactor">
    <cofactor evidence="2">
        <name>[2Fe-2S] cluster</name>
        <dbReference type="ChEBI" id="CHEBI:190135"/>
    </cofactor>
    <text evidence="2">Binds 1 [2Fe-2S] cluster per subunit.</text>
</comment>
<comment type="subunit">
    <text>The main subunits of complex b-c1 are: cytochrome b, cytochrome c1 and the Rieske protein.</text>
</comment>
<comment type="subcellular location">
    <subcellularLocation>
        <location evidence="3">Cell membrane</location>
        <topology evidence="3">Single-pass membrane protein</topology>
    </subcellularLocation>
</comment>
<comment type="miscellaneous">
    <text>The Rieske protein is a high potential 2Fe-2S protein.</text>
</comment>
<comment type="similarity">
    <text evidence="3">Belongs to the Rieske iron-sulfur protein family.</text>
</comment>